<evidence type="ECO:0000255" key="1">
    <source>
        <dbReference type="HAMAP-Rule" id="MF_01520"/>
    </source>
</evidence>
<organism>
    <name type="scientific">Leifsonia xyli subsp. xyli (strain CTCB07)</name>
    <dbReference type="NCBI Taxonomy" id="281090"/>
    <lineage>
        <taxon>Bacteria</taxon>
        <taxon>Bacillati</taxon>
        <taxon>Actinomycetota</taxon>
        <taxon>Actinomycetes</taxon>
        <taxon>Micrococcales</taxon>
        <taxon>Microbacteriaceae</taxon>
        <taxon>Leifsonia</taxon>
    </lineage>
</organism>
<sequence length="386" mass="39296">MCTASRPRIAVIVVAAGSGTRLGAGSPKAFVTLGGRTLLERSLHAVRCMREPAQVVVVAPEERLAEAAALGEAGFGAAVDVVAGGETRQGSVAAGLGALREGVEIVLVHDAARALTPAAQFDAVVAAVDAGGAGVVPGLPVSDTIKRVGADGEVRETVDRSVLSAVQTPQGFPRDQLVAAYAAATTDETDDAELAAAAGHPVTVIPGDARAFKITTPWDLRRAEELLAGLAAPRIGFGTDTHAFDPSAELWLAGLRWEGEPGLAGHSDGDVVAHAIVDALLSAARLGDIGGVFGTGDPRFSGAHGEVFLTETRRLVEEEGFRIGNVSAQIVGNRPKFAPRRAEAETLLSRVLGAPVSVSATTTDGLGLTGRGEGVAVFATALLLAP</sequence>
<comment type="function">
    <text evidence="1">Bifunctional enzyme that catalyzes the formation of 4-diphosphocytidyl-2-C-methyl-D-erythritol from CTP and 2-C-methyl-D-erythritol 4-phosphate (MEP) (IspD), and catalyzes the conversion of 4-diphosphocytidyl-2-C-methyl-D-erythritol 2-phosphate (CDP-ME2P) to 2-C-methyl-D-erythritol 2,4-cyclodiphosphate (ME-CPP) with a corresponding release of cytidine 5-monophosphate (CMP) (IspF).</text>
</comment>
<comment type="catalytic activity">
    <reaction evidence="1">
        <text>2-C-methyl-D-erythritol 4-phosphate + CTP + H(+) = 4-CDP-2-C-methyl-D-erythritol + diphosphate</text>
        <dbReference type="Rhea" id="RHEA:13429"/>
        <dbReference type="ChEBI" id="CHEBI:15378"/>
        <dbReference type="ChEBI" id="CHEBI:33019"/>
        <dbReference type="ChEBI" id="CHEBI:37563"/>
        <dbReference type="ChEBI" id="CHEBI:57823"/>
        <dbReference type="ChEBI" id="CHEBI:58262"/>
        <dbReference type="EC" id="2.7.7.60"/>
    </reaction>
</comment>
<comment type="catalytic activity">
    <reaction evidence="1">
        <text>4-CDP-2-C-methyl-D-erythritol 2-phosphate = 2-C-methyl-D-erythritol 2,4-cyclic diphosphate + CMP</text>
        <dbReference type="Rhea" id="RHEA:23864"/>
        <dbReference type="ChEBI" id="CHEBI:57919"/>
        <dbReference type="ChEBI" id="CHEBI:58483"/>
        <dbReference type="ChEBI" id="CHEBI:60377"/>
        <dbReference type="EC" id="4.6.1.12"/>
    </reaction>
</comment>
<comment type="cofactor">
    <cofactor evidence="1">
        <name>a divalent metal cation</name>
        <dbReference type="ChEBI" id="CHEBI:60240"/>
    </cofactor>
</comment>
<comment type="pathway">
    <text evidence="1">Isoprenoid biosynthesis; isopentenyl diphosphate biosynthesis via DXP pathway; isopentenyl diphosphate from 1-deoxy-D-xylulose 5-phosphate: step 2/6.</text>
</comment>
<comment type="pathway">
    <text evidence="1">Isoprenoid biosynthesis; isopentenyl diphosphate biosynthesis via DXP pathway; isopentenyl diphosphate from 1-deoxy-D-xylulose 5-phosphate: step 4/6.</text>
</comment>
<comment type="similarity">
    <text evidence="1">In the N-terminal section; belongs to the IspD/TarI cytidylyltransferase family. IspD subfamily.</text>
</comment>
<comment type="similarity">
    <text evidence="1">In the C-terminal section; belongs to the IspF family.</text>
</comment>
<dbReference type="EC" id="2.7.7.60" evidence="1"/>
<dbReference type="EC" id="4.6.1.12" evidence="1"/>
<dbReference type="EMBL" id="AE016822">
    <property type="protein sequence ID" value="AAT89566.1"/>
    <property type="molecule type" value="Genomic_DNA"/>
</dbReference>
<dbReference type="RefSeq" id="WP_011186554.1">
    <property type="nucleotide sequence ID" value="NC_006087.1"/>
</dbReference>
<dbReference type="SMR" id="Q6ADI0"/>
<dbReference type="STRING" id="281090.Lxx18250"/>
<dbReference type="KEGG" id="lxx:Lxx18250"/>
<dbReference type="eggNOG" id="COG0245">
    <property type="taxonomic scope" value="Bacteria"/>
</dbReference>
<dbReference type="eggNOG" id="COG1211">
    <property type="taxonomic scope" value="Bacteria"/>
</dbReference>
<dbReference type="HOGENOM" id="CLU_042800_2_5_11"/>
<dbReference type="UniPathway" id="UPA00056">
    <property type="reaction ID" value="UER00093"/>
</dbReference>
<dbReference type="UniPathway" id="UPA00056">
    <property type="reaction ID" value="UER00095"/>
</dbReference>
<dbReference type="Proteomes" id="UP000001306">
    <property type="component" value="Chromosome"/>
</dbReference>
<dbReference type="GO" id="GO:0008685">
    <property type="term" value="F:2-C-methyl-D-erythritol 2,4-cyclodiphosphate synthase activity"/>
    <property type="evidence" value="ECO:0007669"/>
    <property type="project" value="UniProtKB-UniRule"/>
</dbReference>
<dbReference type="GO" id="GO:0050518">
    <property type="term" value="F:2-C-methyl-D-erythritol 4-phosphate cytidylyltransferase activity"/>
    <property type="evidence" value="ECO:0007669"/>
    <property type="project" value="UniProtKB-UniRule"/>
</dbReference>
<dbReference type="GO" id="GO:0046872">
    <property type="term" value="F:metal ion binding"/>
    <property type="evidence" value="ECO:0007669"/>
    <property type="project" value="UniProtKB-KW"/>
</dbReference>
<dbReference type="GO" id="GO:0019288">
    <property type="term" value="P:isopentenyl diphosphate biosynthetic process, methylerythritol 4-phosphate pathway"/>
    <property type="evidence" value="ECO:0007669"/>
    <property type="project" value="UniProtKB-UniRule"/>
</dbReference>
<dbReference type="GO" id="GO:0016114">
    <property type="term" value="P:terpenoid biosynthetic process"/>
    <property type="evidence" value="ECO:0007669"/>
    <property type="project" value="InterPro"/>
</dbReference>
<dbReference type="CDD" id="cd02516">
    <property type="entry name" value="CDP-ME_synthetase"/>
    <property type="match status" value="1"/>
</dbReference>
<dbReference type="CDD" id="cd00554">
    <property type="entry name" value="MECDP_synthase"/>
    <property type="match status" value="1"/>
</dbReference>
<dbReference type="FunFam" id="3.30.1330.50:FF:000003">
    <property type="entry name" value="2-C-methyl-D-erythritol 2,4-cyclodiphosphate synthase"/>
    <property type="match status" value="1"/>
</dbReference>
<dbReference type="FunFam" id="3.90.550.10:FF:000003">
    <property type="entry name" value="2-C-methyl-D-erythritol 4-phosphate cytidylyltransferase"/>
    <property type="match status" value="1"/>
</dbReference>
<dbReference type="Gene3D" id="3.30.1330.50">
    <property type="entry name" value="2-C-methyl-D-erythritol 2,4-cyclodiphosphate synthase"/>
    <property type="match status" value="1"/>
</dbReference>
<dbReference type="Gene3D" id="3.90.550.10">
    <property type="entry name" value="Spore Coat Polysaccharide Biosynthesis Protein SpsA, Chain A"/>
    <property type="match status" value="1"/>
</dbReference>
<dbReference type="HAMAP" id="MF_00108">
    <property type="entry name" value="IspD"/>
    <property type="match status" value="1"/>
</dbReference>
<dbReference type="HAMAP" id="MF_01520">
    <property type="entry name" value="IspDF"/>
    <property type="match status" value="1"/>
</dbReference>
<dbReference type="HAMAP" id="MF_00107">
    <property type="entry name" value="IspF"/>
    <property type="match status" value="1"/>
</dbReference>
<dbReference type="InterPro" id="IPR001228">
    <property type="entry name" value="IspD"/>
</dbReference>
<dbReference type="InterPro" id="IPR026596">
    <property type="entry name" value="IspD/F"/>
</dbReference>
<dbReference type="InterPro" id="IPR034683">
    <property type="entry name" value="IspD/TarI"/>
</dbReference>
<dbReference type="InterPro" id="IPR050088">
    <property type="entry name" value="IspD/TarI_cytidylyltransf_bact"/>
</dbReference>
<dbReference type="InterPro" id="IPR018294">
    <property type="entry name" value="ISPD_synthase_CS"/>
</dbReference>
<dbReference type="InterPro" id="IPR003526">
    <property type="entry name" value="MECDP_synthase"/>
</dbReference>
<dbReference type="InterPro" id="IPR020555">
    <property type="entry name" value="MECDP_synthase_CS"/>
</dbReference>
<dbReference type="InterPro" id="IPR036571">
    <property type="entry name" value="MECDP_synthase_sf"/>
</dbReference>
<dbReference type="InterPro" id="IPR029044">
    <property type="entry name" value="Nucleotide-diphossugar_trans"/>
</dbReference>
<dbReference type="NCBIfam" id="TIGR00453">
    <property type="entry name" value="ispD"/>
    <property type="match status" value="1"/>
</dbReference>
<dbReference type="NCBIfam" id="TIGR00151">
    <property type="entry name" value="ispF"/>
    <property type="match status" value="1"/>
</dbReference>
<dbReference type="PANTHER" id="PTHR32125">
    <property type="entry name" value="2-C-METHYL-D-ERYTHRITOL 4-PHOSPHATE CYTIDYLYLTRANSFERASE, CHLOROPLASTIC"/>
    <property type="match status" value="1"/>
</dbReference>
<dbReference type="PANTHER" id="PTHR32125:SF4">
    <property type="entry name" value="2-C-METHYL-D-ERYTHRITOL 4-PHOSPHATE CYTIDYLYLTRANSFERASE, CHLOROPLASTIC"/>
    <property type="match status" value="1"/>
</dbReference>
<dbReference type="Pfam" id="PF01128">
    <property type="entry name" value="IspD"/>
    <property type="match status" value="1"/>
</dbReference>
<dbReference type="Pfam" id="PF02542">
    <property type="entry name" value="YgbB"/>
    <property type="match status" value="1"/>
</dbReference>
<dbReference type="SUPFAM" id="SSF69765">
    <property type="entry name" value="IpsF-like"/>
    <property type="match status" value="1"/>
</dbReference>
<dbReference type="SUPFAM" id="SSF53448">
    <property type="entry name" value="Nucleotide-diphospho-sugar transferases"/>
    <property type="match status" value="1"/>
</dbReference>
<dbReference type="PROSITE" id="PS01295">
    <property type="entry name" value="ISPD"/>
    <property type="match status" value="1"/>
</dbReference>
<dbReference type="PROSITE" id="PS01350">
    <property type="entry name" value="ISPF"/>
    <property type="match status" value="1"/>
</dbReference>
<protein>
    <recommendedName>
        <fullName evidence="1">Bifunctional enzyme IspD/IspF</fullName>
    </recommendedName>
    <domain>
        <recommendedName>
            <fullName evidence="1">2-C-methyl-D-erythritol 4-phosphate cytidylyltransferase</fullName>
            <ecNumber evidence="1">2.7.7.60</ecNumber>
        </recommendedName>
        <alternativeName>
            <fullName evidence="1">4-diphosphocytidyl-2C-methyl-D-erythritol synthase</fullName>
        </alternativeName>
        <alternativeName>
            <fullName evidence="1">MEP cytidylyltransferase</fullName>
            <shortName evidence="1">MCT</shortName>
        </alternativeName>
    </domain>
    <domain>
        <recommendedName>
            <fullName evidence="1">2-C-methyl-D-erythritol 2,4-cyclodiphosphate synthase</fullName>
            <shortName evidence="1">MECDP-synthase</shortName>
            <shortName evidence="1">MECPP-synthase</shortName>
            <shortName evidence="1">MECPS</shortName>
            <ecNumber evidence="1">4.6.1.12</ecNumber>
        </recommendedName>
    </domain>
</protein>
<gene>
    <name evidence="1" type="primary">ispDF</name>
    <name type="synonym">ispF</name>
    <name type="ordered locus">Lxx18250</name>
</gene>
<accession>Q6ADI0</accession>
<reference key="1">
    <citation type="journal article" date="2004" name="Mol. Plant Microbe Interact.">
        <title>The genome sequence of the Gram-positive sugarcane pathogen Leifsonia xyli subsp. xyli.</title>
        <authorList>
            <person name="Monteiro-Vitorello C.B."/>
            <person name="Camargo L.E.A."/>
            <person name="Van Sluys M.A."/>
            <person name="Kitajima J.P."/>
            <person name="Truffi D."/>
            <person name="do Amaral A.M."/>
            <person name="Harakava R."/>
            <person name="de Oliveira J.C.F."/>
            <person name="Wood D."/>
            <person name="de Oliveira M.C."/>
            <person name="Miyaki C.Y."/>
            <person name="Takita M.A."/>
            <person name="da Silva A.C.R."/>
            <person name="Furlan L.R."/>
            <person name="Carraro D.M."/>
            <person name="Camarotte G."/>
            <person name="Almeida N.F. Jr."/>
            <person name="Carrer H."/>
            <person name="Coutinho L.L."/>
            <person name="El-Dorry H.A."/>
            <person name="Ferro M.I.T."/>
            <person name="Gagliardi P.R."/>
            <person name="Giglioti E."/>
            <person name="Goldman M.H.S."/>
            <person name="Goldman G.H."/>
            <person name="Kimura E.T."/>
            <person name="Ferro E.S."/>
            <person name="Kuramae E.E."/>
            <person name="Lemos E.G.M."/>
            <person name="Lemos M.V.F."/>
            <person name="Mauro S.M.Z."/>
            <person name="Machado M.A."/>
            <person name="Marino C.L."/>
            <person name="Menck C.F."/>
            <person name="Nunes L.R."/>
            <person name="Oliveira R.C."/>
            <person name="Pereira G.G."/>
            <person name="Siqueira W."/>
            <person name="de Souza A.A."/>
            <person name="Tsai S.M."/>
            <person name="Zanca A.S."/>
            <person name="Simpson A.J.G."/>
            <person name="Brumbley S.M."/>
            <person name="Setubal J.C."/>
        </authorList>
    </citation>
    <scope>NUCLEOTIDE SEQUENCE [LARGE SCALE GENOMIC DNA]</scope>
    <source>
        <strain>CTCB07</strain>
    </source>
</reference>
<feature type="chain" id="PRO_0000075671" description="Bifunctional enzyme IspD/IspF">
    <location>
        <begin position="1"/>
        <end position="386"/>
    </location>
</feature>
<feature type="region of interest" description="2-C-methyl-D-erythritol 4-phosphate cytidylyltransferase" evidence="1">
    <location>
        <begin position="1"/>
        <end position="233"/>
    </location>
</feature>
<feature type="region of interest" description="2-C-methyl-D-erythritol 2,4-cyclodiphosphate synthase" evidence="1">
    <location>
        <begin position="234"/>
        <end position="386"/>
    </location>
</feature>
<feature type="binding site" evidence="1">
    <location>
        <begin position="240"/>
        <end position="242"/>
    </location>
    <ligand>
        <name>4-CDP-2-C-methyl-D-erythritol 2-phosphate</name>
        <dbReference type="ChEBI" id="CHEBI:57919"/>
    </ligand>
</feature>
<feature type="binding site" evidence="1">
    <location>
        <position position="240"/>
    </location>
    <ligand>
        <name>a divalent metal cation</name>
        <dbReference type="ChEBI" id="CHEBI:60240"/>
    </ligand>
</feature>
<feature type="binding site" evidence="1">
    <location>
        <position position="242"/>
    </location>
    <ligand>
        <name>a divalent metal cation</name>
        <dbReference type="ChEBI" id="CHEBI:60240"/>
    </ligand>
</feature>
<feature type="binding site" evidence="1">
    <location>
        <begin position="266"/>
        <end position="267"/>
    </location>
    <ligand>
        <name>4-CDP-2-C-methyl-D-erythritol 2-phosphate</name>
        <dbReference type="ChEBI" id="CHEBI:57919"/>
    </ligand>
</feature>
<feature type="binding site" evidence="1">
    <location>
        <position position="274"/>
    </location>
    <ligand>
        <name>a divalent metal cation</name>
        <dbReference type="ChEBI" id="CHEBI:60240"/>
    </ligand>
</feature>
<feature type="binding site" evidence="1">
    <location>
        <begin position="288"/>
        <end position="290"/>
    </location>
    <ligand>
        <name>4-CDP-2-C-methyl-D-erythritol 2-phosphate</name>
        <dbReference type="ChEBI" id="CHEBI:57919"/>
    </ligand>
</feature>
<feature type="binding site" evidence="1">
    <location>
        <begin position="361"/>
        <end position="364"/>
    </location>
    <ligand>
        <name>4-CDP-2-C-methyl-D-erythritol 2-phosphate</name>
        <dbReference type="ChEBI" id="CHEBI:57919"/>
    </ligand>
</feature>
<feature type="binding site" evidence="1">
    <location>
        <position position="371"/>
    </location>
    <ligand>
        <name>4-CDP-2-C-methyl-D-erythritol 2-phosphate</name>
        <dbReference type="ChEBI" id="CHEBI:57919"/>
    </ligand>
</feature>
<feature type="site" description="Transition state stabilizer" evidence="1">
    <location>
        <position position="21"/>
    </location>
</feature>
<feature type="site" description="Transition state stabilizer" evidence="1">
    <location>
        <position position="28"/>
    </location>
</feature>
<feature type="site" description="Positions MEP for the nucleophilic attack" evidence="1">
    <location>
        <position position="160"/>
    </location>
</feature>
<feature type="site" description="Positions MEP for the nucleophilic attack" evidence="1">
    <location>
        <position position="213"/>
    </location>
</feature>
<feature type="site" description="Transition state stabilizer" evidence="1">
    <location>
        <position position="266"/>
    </location>
</feature>
<feature type="site" description="Transition state stabilizer" evidence="1">
    <location>
        <position position="362"/>
    </location>
</feature>
<name>ISPDF_LEIXX</name>
<keyword id="KW-0414">Isoprene biosynthesis</keyword>
<keyword id="KW-0456">Lyase</keyword>
<keyword id="KW-0479">Metal-binding</keyword>
<keyword id="KW-0511">Multifunctional enzyme</keyword>
<keyword id="KW-0548">Nucleotidyltransferase</keyword>
<keyword id="KW-1185">Reference proteome</keyword>
<keyword id="KW-0808">Transferase</keyword>
<proteinExistence type="inferred from homology"/>